<dbReference type="EC" id="4.1.1.39" evidence="1"/>
<dbReference type="EMBL" id="AY228468">
    <property type="protein sequence ID" value="AAO74041.1"/>
    <property type="molecule type" value="Genomic_DNA"/>
</dbReference>
<dbReference type="RefSeq" id="NP_817193.1">
    <property type="nucleotide sequence ID" value="NC_004677.2"/>
</dbReference>
<dbReference type="SMR" id="Q7GUD0"/>
<dbReference type="GeneID" id="806951"/>
<dbReference type="GO" id="GO:0009507">
    <property type="term" value="C:chloroplast"/>
    <property type="evidence" value="ECO:0007669"/>
    <property type="project" value="UniProtKB-SubCell"/>
</dbReference>
<dbReference type="GO" id="GO:0000287">
    <property type="term" value="F:magnesium ion binding"/>
    <property type="evidence" value="ECO:0007669"/>
    <property type="project" value="UniProtKB-UniRule"/>
</dbReference>
<dbReference type="GO" id="GO:0004497">
    <property type="term" value="F:monooxygenase activity"/>
    <property type="evidence" value="ECO:0007669"/>
    <property type="project" value="UniProtKB-KW"/>
</dbReference>
<dbReference type="GO" id="GO:0016984">
    <property type="term" value="F:ribulose-bisphosphate carboxylase activity"/>
    <property type="evidence" value="ECO:0007669"/>
    <property type="project" value="UniProtKB-UniRule"/>
</dbReference>
<dbReference type="GO" id="GO:0009853">
    <property type="term" value="P:photorespiration"/>
    <property type="evidence" value="ECO:0007669"/>
    <property type="project" value="UniProtKB-KW"/>
</dbReference>
<dbReference type="GO" id="GO:0019253">
    <property type="term" value="P:reductive pentose-phosphate cycle"/>
    <property type="evidence" value="ECO:0007669"/>
    <property type="project" value="UniProtKB-UniRule"/>
</dbReference>
<dbReference type="CDD" id="cd08212">
    <property type="entry name" value="RuBisCO_large_I"/>
    <property type="match status" value="1"/>
</dbReference>
<dbReference type="FunFam" id="3.20.20.110:FF:000001">
    <property type="entry name" value="Ribulose bisphosphate carboxylase large chain"/>
    <property type="match status" value="1"/>
</dbReference>
<dbReference type="FunFam" id="3.30.70.150:FF:000001">
    <property type="entry name" value="Ribulose bisphosphate carboxylase large chain"/>
    <property type="match status" value="1"/>
</dbReference>
<dbReference type="Gene3D" id="3.20.20.110">
    <property type="entry name" value="Ribulose bisphosphate carboxylase, large subunit, C-terminal domain"/>
    <property type="match status" value="1"/>
</dbReference>
<dbReference type="Gene3D" id="3.30.70.150">
    <property type="entry name" value="RuBisCO large subunit, N-terminal domain"/>
    <property type="match status" value="1"/>
</dbReference>
<dbReference type="HAMAP" id="MF_01338">
    <property type="entry name" value="RuBisCO_L_type1"/>
    <property type="match status" value="1"/>
</dbReference>
<dbReference type="InterPro" id="IPR033966">
    <property type="entry name" value="RuBisCO"/>
</dbReference>
<dbReference type="InterPro" id="IPR020878">
    <property type="entry name" value="RuBisCo_large_chain_AS"/>
</dbReference>
<dbReference type="InterPro" id="IPR000685">
    <property type="entry name" value="RuBisCO_lsu_C"/>
</dbReference>
<dbReference type="InterPro" id="IPR036376">
    <property type="entry name" value="RuBisCO_lsu_C_sf"/>
</dbReference>
<dbReference type="InterPro" id="IPR017443">
    <property type="entry name" value="RuBisCO_lsu_fd_N"/>
</dbReference>
<dbReference type="InterPro" id="IPR036422">
    <property type="entry name" value="RuBisCO_lsu_N_sf"/>
</dbReference>
<dbReference type="InterPro" id="IPR020888">
    <property type="entry name" value="RuBisCO_lsuI"/>
</dbReference>
<dbReference type="NCBIfam" id="NF003252">
    <property type="entry name" value="PRK04208.1"/>
    <property type="match status" value="1"/>
</dbReference>
<dbReference type="PANTHER" id="PTHR42704">
    <property type="entry name" value="RIBULOSE BISPHOSPHATE CARBOXYLASE"/>
    <property type="match status" value="1"/>
</dbReference>
<dbReference type="PANTHER" id="PTHR42704:SF15">
    <property type="entry name" value="RIBULOSE BISPHOSPHATE CARBOXYLASE LARGE CHAIN"/>
    <property type="match status" value="1"/>
</dbReference>
<dbReference type="Pfam" id="PF00016">
    <property type="entry name" value="RuBisCO_large"/>
    <property type="match status" value="1"/>
</dbReference>
<dbReference type="Pfam" id="PF02788">
    <property type="entry name" value="RuBisCO_large_N"/>
    <property type="match status" value="1"/>
</dbReference>
<dbReference type="SFLD" id="SFLDG01052">
    <property type="entry name" value="RuBisCO"/>
    <property type="match status" value="1"/>
</dbReference>
<dbReference type="SFLD" id="SFLDS00014">
    <property type="entry name" value="RuBisCO"/>
    <property type="match status" value="1"/>
</dbReference>
<dbReference type="SFLD" id="SFLDG00301">
    <property type="entry name" value="RuBisCO-like_proteins"/>
    <property type="match status" value="1"/>
</dbReference>
<dbReference type="SUPFAM" id="SSF51649">
    <property type="entry name" value="RuBisCo, C-terminal domain"/>
    <property type="match status" value="1"/>
</dbReference>
<dbReference type="SUPFAM" id="SSF54966">
    <property type="entry name" value="RuBisCO, large subunit, small (N-terminal) domain"/>
    <property type="match status" value="1"/>
</dbReference>
<dbReference type="PROSITE" id="PS00157">
    <property type="entry name" value="RUBISCO_LARGE"/>
    <property type="match status" value="1"/>
</dbReference>
<feature type="propeptide" id="PRO_0000042915" evidence="1">
    <location>
        <begin position="1"/>
        <end position="2"/>
    </location>
</feature>
<feature type="chain" id="PRO_0000042916" description="Ribulose bisphosphate carboxylase large chain">
    <location>
        <begin position="3"/>
        <end position="475"/>
    </location>
</feature>
<feature type="active site" description="Proton acceptor" evidence="1">
    <location>
        <position position="175"/>
    </location>
</feature>
<feature type="active site" description="Proton acceptor" evidence="1">
    <location>
        <position position="294"/>
    </location>
</feature>
<feature type="binding site" description="in homodimeric partner" evidence="1">
    <location>
        <position position="123"/>
    </location>
    <ligand>
        <name>substrate</name>
    </ligand>
</feature>
<feature type="binding site" evidence="1">
    <location>
        <position position="173"/>
    </location>
    <ligand>
        <name>substrate</name>
    </ligand>
</feature>
<feature type="binding site" evidence="1">
    <location>
        <position position="177"/>
    </location>
    <ligand>
        <name>substrate</name>
    </ligand>
</feature>
<feature type="binding site" description="via carbamate group" evidence="1">
    <location>
        <position position="201"/>
    </location>
    <ligand>
        <name>Mg(2+)</name>
        <dbReference type="ChEBI" id="CHEBI:18420"/>
    </ligand>
</feature>
<feature type="binding site" evidence="1">
    <location>
        <position position="203"/>
    </location>
    <ligand>
        <name>Mg(2+)</name>
        <dbReference type="ChEBI" id="CHEBI:18420"/>
    </ligand>
</feature>
<feature type="binding site" evidence="1">
    <location>
        <position position="204"/>
    </location>
    <ligand>
        <name>Mg(2+)</name>
        <dbReference type="ChEBI" id="CHEBI:18420"/>
    </ligand>
</feature>
<feature type="binding site" evidence="1">
    <location>
        <position position="295"/>
    </location>
    <ligand>
        <name>substrate</name>
    </ligand>
</feature>
<feature type="binding site" evidence="1">
    <location>
        <position position="327"/>
    </location>
    <ligand>
        <name>substrate</name>
    </ligand>
</feature>
<feature type="binding site" evidence="1">
    <location>
        <position position="379"/>
    </location>
    <ligand>
        <name>substrate</name>
    </ligand>
</feature>
<feature type="site" description="Transition state stabilizer" evidence="1">
    <location>
        <position position="334"/>
    </location>
</feature>
<feature type="modified residue" description="N-acetylproline" evidence="1">
    <location>
        <position position="3"/>
    </location>
</feature>
<feature type="modified residue" description="N6,N6,N6-trimethyllysine" evidence="1">
    <location>
        <position position="14"/>
    </location>
</feature>
<feature type="modified residue" description="N6-carboxylysine" evidence="1">
    <location>
        <position position="201"/>
    </location>
</feature>
<feature type="disulfide bond" description="Interchain; in linked form" evidence="1">
    <location>
        <position position="247"/>
    </location>
</feature>
<reference key="1">
    <citation type="submission" date="2003-02" db="EMBL/GenBank/DDBJ databases">
        <title>Complete nucleotide sequence of Pinus koraiensis.</title>
        <authorList>
            <person name="Noh E.W."/>
            <person name="Lee J.S."/>
            <person name="Choi Y.I."/>
            <person name="Han M.S."/>
            <person name="Yi Y.S."/>
            <person name="Han S.U."/>
        </authorList>
    </citation>
    <scope>NUCLEOTIDE SEQUENCE [LARGE SCALE GENOMIC DNA]</scope>
    <source>
        <strain>KangWon16</strain>
    </source>
</reference>
<protein>
    <recommendedName>
        <fullName evidence="1">Ribulose bisphosphate carboxylase large chain</fullName>
        <shortName evidence="1">RuBisCO large subunit</shortName>
        <ecNumber evidence="1">4.1.1.39</ecNumber>
    </recommendedName>
</protein>
<evidence type="ECO:0000255" key="1">
    <source>
        <dbReference type="HAMAP-Rule" id="MF_01338"/>
    </source>
</evidence>
<proteinExistence type="inferred from homology"/>
<organism>
    <name type="scientific">Pinus koraiensis</name>
    <name type="common">Korean pine</name>
    <dbReference type="NCBI Taxonomy" id="88728"/>
    <lineage>
        <taxon>Eukaryota</taxon>
        <taxon>Viridiplantae</taxon>
        <taxon>Streptophyta</taxon>
        <taxon>Embryophyta</taxon>
        <taxon>Tracheophyta</taxon>
        <taxon>Spermatophyta</taxon>
        <taxon>Pinopsida</taxon>
        <taxon>Pinidae</taxon>
        <taxon>Conifers I</taxon>
        <taxon>Pinales</taxon>
        <taxon>Pinaceae</taxon>
        <taxon>Pinus</taxon>
        <taxon>Pinus subgen. Strobus</taxon>
    </lineage>
</organism>
<accession>Q7GUD0</accession>
<comment type="function">
    <text evidence="1">RuBisCO catalyzes two reactions: the carboxylation of D-ribulose 1,5-bisphosphate, the primary event in carbon dioxide fixation, as well as the oxidative fragmentation of the pentose substrate in the photorespiration process. Both reactions occur simultaneously and in competition at the same active site.</text>
</comment>
<comment type="catalytic activity">
    <reaction evidence="1">
        <text>2 (2R)-3-phosphoglycerate + 2 H(+) = D-ribulose 1,5-bisphosphate + CO2 + H2O</text>
        <dbReference type="Rhea" id="RHEA:23124"/>
        <dbReference type="ChEBI" id="CHEBI:15377"/>
        <dbReference type="ChEBI" id="CHEBI:15378"/>
        <dbReference type="ChEBI" id="CHEBI:16526"/>
        <dbReference type="ChEBI" id="CHEBI:57870"/>
        <dbReference type="ChEBI" id="CHEBI:58272"/>
        <dbReference type="EC" id="4.1.1.39"/>
    </reaction>
</comment>
<comment type="catalytic activity">
    <reaction evidence="1">
        <text>D-ribulose 1,5-bisphosphate + O2 = 2-phosphoglycolate + (2R)-3-phosphoglycerate + 2 H(+)</text>
        <dbReference type="Rhea" id="RHEA:36631"/>
        <dbReference type="ChEBI" id="CHEBI:15378"/>
        <dbReference type="ChEBI" id="CHEBI:15379"/>
        <dbReference type="ChEBI" id="CHEBI:57870"/>
        <dbReference type="ChEBI" id="CHEBI:58033"/>
        <dbReference type="ChEBI" id="CHEBI:58272"/>
    </reaction>
</comment>
<comment type="cofactor">
    <cofactor evidence="1">
        <name>Mg(2+)</name>
        <dbReference type="ChEBI" id="CHEBI:18420"/>
    </cofactor>
    <text evidence="1">Binds 1 Mg(2+) ion per subunit.</text>
</comment>
<comment type="subunit">
    <text evidence="1">Heterohexadecamer of 8 large chains and 8 small chains; disulfide-linked. The disulfide link is formed within the large subunit homodimers.</text>
</comment>
<comment type="subcellular location">
    <subcellularLocation>
        <location>Plastid</location>
        <location>Chloroplast</location>
    </subcellularLocation>
</comment>
<comment type="PTM">
    <text evidence="1">The disulfide bond which can form in the large chain dimeric partners within the hexadecamer appears to be associated with oxidative stress and protein turnover.</text>
</comment>
<comment type="miscellaneous">
    <text evidence="1">The basic functional RuBisCO is composed of a large chain homodimer in a 'head-to-tail' conformation. In form I RuBisCO this homodimer is arranged in a barrel-like tetramer with the small subunits forming a tetrameric 'cap' on each end of the 'barrel'.</text>
</comment>
<comment type="similarity">
    <text evidence="1">Belongs to the RuBisCO large chain family. Type I subfamily.</text>
</comment>
<sequence>MSPKTETKASVGFKAGVKDYRLTYYTPEYQTKDTDILAAFRVTPQPGVPAEEAGAAVAAESSTGTWTTVWTDGLTSLDRYKGRCYDIEPVPGEENQFIAYVAYPLDLFEEGSVTNLFTSIVGNVFGFKALRALRLEDLRIPPAYSKTFQGPPHGIQVERDKLNKYGRPLLGCTIKPKLGLSAKNYGRAVYECLRGGLDFTKDDENVNSQPFMRWRDRFVFCAEAINKAQAETGEIKGHYLNATAGTCEEMMKRAVFARELGVPIVMHDYLTGGFTANTSLAHYCRDNGLLLHIHRAMHAVIDRQRNHGMHFRVLAKALRMSGGDHVHAGTVVGKLEGERDVTLGFVDLLRDDFIEKDRSRGVYFTQDWVSMPGVLPVASGGIHVWHMPALTEIFGDDSVLQFGGGTLGHPWGNAPGAAANRVALEACVQARNEGRDLAREGNEVIREACKWSPELAAACEIWKEIKFEFDVIDRL</sequence>
<geneLocation type="chloroplast"/>
<keyword id="KW-0007">Acetylation</keyword>
<keyword id="KW-0113">Calvin cycle</keyword>
<keyword id="KW-0120">Carbon dioxide fixation</keyword>
<keyword id="KW-0150">Chloroplast</keyword>
<keyword id="KW-1015">Disulfide bond</keyword>
<keyword id="KW-0456">Lyase</keyword>
<keyword id="KW-0460">Magnesium</keyword>
<keyword id="KW-0479">Metal-binding</keyword>
<keyword id="KW-0488">Methylation</keyword>
<keyword id="KW-0503">Monooxygenase</keyword>
<keyword id="KW-0560">Oxidoreductase</keyword>
<keyword id="KW-0601">Photorespiration</keyword>
<keyword id="KW-0602">Photosynthesis</keyword>
<keyword id="KW-0934">Plastid</keyword>
<gene>
    <name evidence="1" type="primary">rbcL</name>
</gene>
<name>RBL_PINKO</name>